<reference key="1">
    <citation type="submission" date="2007-07" db="EMBL/GenBank/DDBJ databases">
        <title>Complete sequence of Fervidobacterium nodosum Rt17-B1.</title>
        <authorList>
            <consortium name="US DOE Joint Genome Institute"/>
            <person name="Copeland A."/>
            <person name="Lucas S."/>
            <person name="Lapidus A."/>
            <person name="Barry K."/>
            <person name="Glavina del Rio T."/>
            <person name="Dalin E."/>
            <person name="Tice H."/>
            <person name="Pitluck S."/>
            <person name="Saunders E."/>
            <person name="Brettin T."/>
            <person name="Bruce D."/>
            <person name="Detter J.C."/>
            <person name="Han C."/>
            <person name="Schmutz J."/>
            <person name="Larimer F."/>
            <person name="Land M."/>
            <person name="Hauser L."/>
            <person name="Kyrpides N."/>
            <person name="Mikhailova N."/>
            <person name="Nelson K."/>
            <person name="Gogarten J.P."/>
            <person name="Noll K."/>
            <person name="Richardson P."/>
        </authorList>
    </citation>
    <scope>NUCLEOTIDE SEQUENCE [LARGE SCALE GENOMIC DNA]</scope>
    <source>
        <strain>ATCC 35602 / DSM 5306 / Rt17-B1</strain>
    </source>
</reference>
<feature type="chain" id="PRO_1000072485" description="D-aminoacyl-tRNA deacylase">
    <location>
        <begin position="1"/>
        <end position="149"/>
    </location>
</feature>
<feature type="short sequence motif" description="Gly-cisPro motif, important for rejection of L-amino acids" evidence="1">
    <location>
        <begin position="137"/>
        <end position="138"/>
    </location>
</feature>
<comment type="function">
    <text evidence="1">An aminoacyl-tRNA editing enzyme that deacylates mischarged D-aminoacyl-tRNAs. Also deacylates mischarged glycyl-tRNA(Ala), protecting cells against glycine mischarging by AlaRS. Acts via tRNA-based rather than protein-based catalysis; rejects L-amino acids rather than detecting D-amino acids in the active site. By recycling D-aminoacyl-tRNA to D-amino acids and free tRNA molecules, this enzyme counteracts the toxicity associated with the formation of D-aminoacyl-tRNA entities in vivo and helps enforce protein L-homochirality.</text>
</comment>
<comment type="catalytic activity">
    <reaction evidence="1">
        <text>glycyl-tRNA(Ala) + H2O = tRNA(Ala) + glycine + H(+)</text>
        <dbReference type="Rhea" id="RHEA:53744"/>
        <dbReference type="Rhea" id="RHEA-COMP:9657"/>
        <dbReference type="Rhea" id="RHEA-COMP:13640"/>
        <dbReference type="ChEBI" id="CHEBI:15377"/>
        <dbReference type="ChEBI" id="CHEBI:15378"/>
        <dbReference type="ChEBI" id="CHEBI:57305"/>
        <dbReference type="ChEBI" id="CHEBI:78442"/>
        <dbReference type="ChEBI" id="CHEBI:78522"/>
        <dbReference type="EC" id="3.1.1.96"/>
    </reaction>
</comment>
<comment type="catalytic activity">
    <reaction evidence="1">
        <text>a D-aminoacyl-tRNA + H2O = a tRNA + a D-alpha-amino acid + H(+)</text>
        <dbReference type="Rhea" id="RHEA:13953"/>
        <dbReference type="Rhea" id="RHEA-COMP:10123"/>
        <dbReference type="Rhea" id="RHEA-COMP:10124"/>
        <dbReference type="ChEBI" id="CHEBI:15377"/>
        <dbReference type="ChEBI" id="CHEBI:15378"/>
        <dbReference type="ChEBI" id="CHEBI:59871"/>
        <dbReference type="ChEBI" id="CHEBI:78442"/>
        <dbReference type="ChEBI" id="CHEBI:79333"/>
        <dbReference type="EC" id="3.1.1.96"/>
    </reaction>
</comment>
<comment type="subunit">
    <text evidence="1">Homodimer.</text>
</comment>
<comment type="subcellular location">
    <subcellularLocation>
        <location evidence="1">Cytoplasm</location>
    </subcellularLocation>
</comment>
<comment type="domain">
    <text evidence="1">A Gly-cisPro motif from one monomer fits into the active site of the other monomer to allow specific chiral rejection of L-amino acids.</text>
</comment>
<comment type="similarity">
    <text evidence="1">Belongs to the DTD family.</text>
</comment>
<gene>
    <name evidence="1" type="primary">dtd</name>
    <name type="ordered locus">Fnod_1084</name>
</gene>
<name>DTD_FERNB</name>
<organism>
    <name type="scientific">Fervidobacterium nodosum (strain ATCC 35602 / DSM 5306 / Rt17-B1)</name>
    <dbReference type="NCBI Taxonomy" id="381764"/>
    <lineage>
        <taxon>Bacteria</taxon>
        <taxon>Thermotogati</taxon>
        <taxon>Thermotogota</taxon>
        <taxon>Thermotogae</taxon>
        <taxon>Thermotogales</taxon>
        <taxon>Fervidobacteriaceae</taxon>
        <taxon>Fervidobacterium</taxon>
    </lineage>
</organism>
<accession>A7HLZ9</accession>
<keyword id="KW-0963">Cytoplasm</keyword>
<keyword id="KW-0378">Hydrolase</keyword>
<keyword id="KW-1185">Reference proteome</keyword>
<keyword id="KW-0694">RNA-binding</keyword>
<keyword id="KW-0820">tRNA-binding</keyword>
<sequence>MRAVVQRVTKASVSVDGKIVGQIEKGIVVLLGVGKDDNIDDTKYLAEKIVNLRIFDDNDGKMNLSLLDVQGSALIISQFTLYGDCRRGRRPSYSDSANPELAKELYEKFIELVRGYGVHVETGIFAAYMQVEIHNDGPVTLLLDSKKVF</sequence>
<protein>
    <recommendedName>
        <fullName evidence="1">D-aminoacyl-tRNA deacylase</fullName>
        <shortName evidence="1">DTD</shortName>
        <ecNumber evidence="1">3.1.1.96</ecNumber>
    </recommendedName>
    <alternativeName>
        <fullName evidence="1">Gly-tRNA(Ala) deacylase</fullName>
    </alternativeName>
</protein>
<dbReference type="EC" id="3.1.1.96" evidence="1"/>
<dbReference type="EMBL" id="CP000771">
    <property type="protein sequence ID" value="ABS60932.1"/>
    <property type="molecule type" value="Genomic_DNA"/>
</dbReference>
<dbReference type="RefSeq" id="WP_011994245.1">
    <property type="nucleotide sequence ID" value="NC_009718.1"/>
</dbReference>
<dbReference type="SMR" id="A7HLZ9"/>
<dbReference type="STRING" id="381764.Fnod_1084"/>
<dbReference type="KEGG" id="fno:Fnod_1084"/>
<dbReference type="eggNOG" id="COG1490">
    <property type="taxonomic scope" value="Bacteria"/>
</dbReference>
<dbReference type="HOGENOM" id="CLU_076901_1_0_0"/>
<dbReference type="OrthoDB" id="9801395at2"/>
<dbReference type="Proteomes" id="UP000002415">
    <property type="component" value="Chromosome"/>
</dbReference>
<dbReference type="GO" id="GO:0005737">
    <property type="term" value="C:cytoplasm"/>
    <property type="evidence" value="ECO:0007669"/>
    <property type="project" value="UniProtKB-SubCell"/>
</dbReference>
<dbReference type="GO" id="GO:0051500">
    <property type="term" value="F:D-tyrosyl-tRNA(Tyr) deacylase activity"/>
    <property type="evidence" value="ECO:0007669"/>
    <property type="project" value="TreeGrafter"/>
</dbReference>
<dbReference type="GO" id="GO:0106026">
    <property type="term" value="F:Gly-tRNA(Ala) deacylase activity"/>
    <property type="evidence" value="ECO:0007669"/>
    <property type="project" value="UniProtKB-UniRule"/>
</dbReference>
<dbReference type="GO" id="GO:0043908">
    <property type="term" value="F:Ser(Gly)-tRNA(Ala) hydrolase activity"/>
    <property type="evidence" value="ECO:0007669"/>
    <property type="project" value="UniProtKB-UniRule"/>
</dbReference>
<dbReference type="GO" id="GO:0000049">
    <property type="term" value="F:tRNA binding"/>
    <property type="evidence" value="ECO:0007669"/>
    <property type="project" value="UniProtKB-UniRule"/>
</dbReference>
<dbReference type="GO" id="GO:0019478">
    <property type="term" value="P:D-amino acid catabolic process"/>
    <property type="evidence" value="ECO:0007669"/>
    <property type="project" value="UniProtKB-UniRule"/>
</dbReference>
<dbReference type="CDD" id="cd00563">
    <property type="entry name" value="Dtyr_deacylase"/>
    <property type="match status" value="1"/>
</dbReference>
<dbReference type="FunFam" id="3.50.80.10:FF:000001">
    <property type="entry name" value="D-aminoacyl-tRNA deacylase"/>
    <property type="match status" value="1"/>
</dbReference>
<dbReference type="Gene3D" id="3.50.80.10">
    <property type="entry name" value="D-tyrosyl-tRNA(Tyr) deacylase"/>
    <property type="match status" value="1"/>
</dbReference>
<dbReference type="HAMAP" id="MF_00518">
    <property type="entry name" value="Deacylase_Dtd"/>
    <property type="match status" value="1"/>
</dbReference>
<dbReference type="InterPro" id="IPR003732">
    <property type="entry name" value="Daa-tRNA_deacyls_DTD"/>
</dbReference>
<dbReference type="InterPro" id="IPR023509">
    <property type="entry name" value="DTD-like_sf"/>
</dbReference>
<dbReference type="NCBIfam" id="TIGR00256">
    <property type="entry name" value="D-aminoacyl-tRNA deacylase"/>
    <property type="match status" value="1"/>
</dbReference>
<dbReference type="PANTHER" id="PTHR10472:SF5">
    <property type="entry name" value="D-AMINOACYL-TRNA DEACYLASE 1"/>
    <property type="match status" value="1"/>
</dbReference>
<dbReference type="PANTHER" id="PTHR10472">
    <property type="entry name" value="D-TYROSYL-TRNA TYR DEACYLASE"/>
    <property type="match status" value="1"/>
</dbReference>
<dbReference type="Pfam" id="PF02580">
    <property type="entry name" value="Tyr_Deacylase"/>
    <property type="match status" value="1"/>
</dbReference>
<dbReference type="SUPFAM" id="SSF69500">
    <property type="entry name" value="DTD-like"/>
    <property type="match status" value="1"/>
</dbReference>
<evidence type="ECO:0000255" key="1">
    <source>
        <dbReference type="HAMAP-Rule" id="MF_00518"/>
    </source>
</evidence>
<proteinExistence type="inferred from homology"/>